<evidence type="ECO:0000255" key="1">
    <source>
        <dbReference type="HAMAP-Rule" id="MF_00318"/>
    </source>
</evidence>
<keyword id="KW-0963">Cytoplasm</keyword>
<keyword id="KW-0324">Glycolysis</keyword>
<keyword id="KW-0456">Lyase</keyword>
<keyword id="KW-0460">Magnesium</keyword>
<keyword id="KW-0479">Metal-binding</keyword>
<keyword id="KW-1185">Reference proteome</keyword>
<keyword id="KW-0964">Secreted</keyword>
<gene>
    <name evidence="1" type="primary">eno</name>
    <name type="ordered locus">MYPU_5180</name>
</gene>
<comment type="function">
    <text evidence="1">Catalyzes the reversible conversion of 2-phosphoglycerate (2-PG) into phosphoenolpyruvate (PEP). It is essential for the degradation of carbohydrates via glycolysis.</text>
</comment>
<comment type="catalytic activity">
    <reaction evidence="1">
        <text>(2R)-2-phosphoglycerate = phosphoenolpyruvate + H2O</text>
        <dbReference type="Rhea" id="RHEA:10164"/>
        <dbReference type="ChEBI" id="CHEBI:15377"/>
        <dbReference type="ChEBI" id="CHEBI:58289"/>
        <dbReference type="ChEBI" id="CHEBI:58702"/>
        <dbReference type="EC" id="4.2.1.11"/>
    </reaction>
</comment>
<comment type="cofactor">
    <cofactor evidence="1">
        <name>Mg(2+)</name>
        <dbReference type="ChEBI" id="CHEBI:18420"/>
    </cofactor>
    <text evidence="1">Binds a second Mg(2+) ion via substrate during catalysis.</text>
</comment>
<comment type="pathway">
    <text evidence="1">Carbohydrate degradation; glycolysis; pyruvate from D-glyceraldehyde 3-phosphate: step 4/5.</text>
</comment>
<comment type="subcellular location">
    <subcellularLocation>
        <location evidence="1">Cytoplasm</location>
    </subcellularLocation>
    <subcellularLocation>
        <location evidence="1">Secreted</location>
    </subcellularLocation>
    <subcellularLocation>
        <location evidence="1">Cell surface</location>
    </subcellularLocation>
    <text evidence="1">Fractions of enolase are present in both the cytoplasm and on the cell surface.</text>
</comment>
<comment type="similarity">
    <text evidence="1">Belongs to the enolase family.</text>
</comment>
<name>ENO_MYCPU</name>
<reference key="1">
    <citation type="journal article" date="2001" name="Nucleic Acids Res.">
        <title>The complete genome sequence of the murine respiratory pathogen Mycoplasma pulmonis.</title>
        <authorList>
            <person name="Chambaud I."/>
            <person name="Heilig R."/>
            <person name="Ferris S."/>
            <person name="Barbe V."/>
            <person name="Samson D."/>
            <person name="Galisson F."/>
            <person name="Moszer I."/>
            <person name="Dybvig K."/>
            <person name="Wroblewski H."/>
            <person name="Viari A."/>
            <person name="Rocha E.P.C."/>
            <person name="Blanchard A."/>
        </authorList>
    </citation>
    <scope>NUCLEOTIDE SEQUENCE [LARGE SCALE GENOMIC DNA]</scope>
    <source>
        <strain>UAB CTIP</strain>
    </source>
</reference>
<protein>
    <recommendedName>
        <fullName evidence="1">Enolase</fullName>
        <ecNumber evidence="1">4.2.1.11</ecNumber>
    </recommendedName>
    <alternativeName>
        <fullName evidence="1">2-phospho-D-glycerate hydro-lyase</fullName>
    </alternativeName>
    <alternativeName>
        <fullName evidence="1">2-phosphoglycerate dehydratase</fullName>
    </alternativeName>
</protein>
<dbReference type="EC" id="4.2.1.11" evidence="1"/>
<dbReference type="EMBL" id="AL445564">
    <property type="protein sequence ID" value="CAC13691.1"/>
    <property type="molecule type" value="Genomic_DNA"/>
</dbReference>
<dbReference type="PIR" id="F90576">
    <property type="entry name" value="F90576"/>
</dbReference>
<dbReference type="RefSeq" id="WP_010925319.1">
    <property type="nucleotide sequence ID" value="NC_002771.1"/>
</dbReference>
<dbReference type="SMR" id="Q98Q50"/>
<dbReference type="STRING" id="272635.gene:17577120"/>
<dbReference type="KEGG" id="mpu:MYPU_5180"/>
<dbReference type="eggNOG" id="COG0148">
    <property type="taxonomic scope" value="Bacteria"/>
</dbReference>
<dbReference type="HOGENOM" id="CLU_031223_2_1_14"/>
<dbReference type="BioCyc" id="MPUL272635:G1GT6-524-MONOMER"/>
<dbReference type="UniPathway" id="UPA00109">
    <property type="reaction ID" value="UER00187"/>
</dbReference>
<dbReference type="Proteomes" id="UP000000528">
    <property type="component" value="Chromosome"/>
</dbReference>
<dbReference type="GO" id="GO:0009986">
    <property type="term" value="C:cell surface"/>
    <property type="evidence" value="ECO:0007669"/>
    <property type="project" value="UniProtKB-SubCell"/>
</dbReference>
<dbReference type="GO" id="GO:0005576">
    <property type="term" value="C:extracellular region"/>
    <property type="evidence" value="ECO:0007669"/>
    <property type="project" value="UniProtKB-SubCell"/>
</dbReference>
<dbReference type="GO" id="GO:0000015">
    <property type="term" value="C:phosphopyruvate hydratase complex"/>
    <property type="evidence" value="ECO:0007669"/>
    <property type="project" value="InterPro"/>
</dbReference>
<dbReference type="GO" id="GO:0000287">
    <property type="term" value="F:magnesium ion binding"/>
    <property type="evidence" value="ECO:0007669"/>
    <property type="project" value="UniProtKB-UniRule"/>
</dbReference>
<dbReference type="GO" id="GO:0004634">
    <property type="term" value="F:phosphopyruvate hydratase activity"/>
    <property type="evidence" value="ECO:0007669"/>
    <property type="project" value="UniProtKB-UniRule"/>
</dbReference>
<dbReference type="GO" id="GO:0006096">
    <property type="term" value="P:glycolytic process"/>
    <property type="evidence" value="ECO:0007669"/>
    <property type="project" value="UniProtKB-UniRule"/>
</dbReference>
<dbReference type="CDD" id="cd03313">
    <property type="entry name" value="enolase"/>
    <property type="match status" value="1"/>
</dbReference>
<dbReference type="FunFam" id="3.30.390.10:FF:000001">
    <property type="entry name" value="Enolase"/>
    <property type="match status" value="1"/>
</dbReference>
<dbReference type="Gene3D" id="3.20.20.120">
    <property type="entry name" value="Enolase-like C-terminal domain"/>
    <property type="match status" value="1"/>
</dbReference>
<dbReference type="Gene3D" id="3.30.390.10">
    <property type="entry name" value="Enolase-like, N-terminal domain"/>
    <property type="match status" value="1"/>
</dbReference>
<dbReference type="HAMAP" id="MF_00318">
    <property type="entry name" value="Enolase"/>
    <property type="match status" value="1"/>
</dbReference>
<dbReference type="InterPro" id="IPR000941">
    <property type="entry name" value="Enolase"/>
</dbReference>
<dbReference type="InterPro" id="IPR036849">
    <property type="entry name" value="Enolase-like_C_sf"/>
</dbReference>
<dbReference type="InterPro" id="IPR029017">
    <property type="entry name" value="Enolase-like_N"/>
</dbReference>
<dbReference type="InterPro" id="IPR020810">
    <property type="entry name" value="Enolase_C"/>
</dbReference>
<dbReference type="InterPro" id="IPR020809">
    <property type="entry name" value="Enolase_CS"/>
</dbReference>
<dbReference type="InterPro" id="IPR020811">
    <property type="entry name" value="Enolase_N"/>
</dbReference>
<dbReference type="NCBIfam" id="TIGR01060">
    <property type="entry name" value="eno"/>
    <property type="match status" value="1"/>
</dbReference>
<dbReference type="PANTHER" id="PTHR11902">
    <property type="entry name" value="ENOLASE"/>
    <property type="match status" value="1"/>
</dbReference>
<dbReference type="PANTHER" id="PTHR11902:SF1">
    <property type="entry name" value="ENOLASE"/>
    <property type="match status" value="1"/>
</dbReference>
<dbReference type="Pfam" id="PF00113">
    <property type="entry name" value="Enolase_C"/>
    <property type="match status" value="1"/>
</dbReference>
<dbReference type="Pfam" id="PF03952">
    <property type="entry name" value="Enolase_N"/>
    <property type="match status" value="1"/>
</dbReference>
<dbReference type="PIRSF" id="PIRSF001400">
    <property type="entry name" value="Enolase"/>
    <property type="match status" value="1"/>
</dbReference>
<dbReference type="PRINTS" id="PR00148">
    <property type="entry name" value="ENOLASE"/>
</dbReference>
<dbReference type="SFLD" id="SFLDF00002">
    <property type="entry name" value="enolase"/>
    <property type="match status" value="1"/>
</dbReference>
<dbReference type="SFLD" id="SFLDG00178">
    <property type="entry name" value="enolase"/>
    <property type="match status" value="1"/>
</dbReference>
<dbReference type="SMART" id="SM01192">
    <property type="entry name" value="Enolase_C"/>
    <property type="match status" value="1"/>
</dbReference>
<dbReference type="SMART" id="SM01193">
    <property type="entry name" value="Enolase_N"/>
    <property type="match status" value="1"/>
</dbReference>
<dbReference type="SUPFAM" id="SSF51604">
    <property type="entry name" value="Enolase C-terminal domain-like"/>
    <property type="match status" value="1"/>
</dbReference>
<dbReference type="SUPFAM" id="SSF54826">
    <property type="entry name" value="Enolase N-terminal domain-like"/>
    <property type="match status" value="1"/>
</dbReference>
<dbReference type="PROSITE" id="PS00164">
    <property type="entry name" value="ENOLASE"/>
    <property type="match status" value="1"/>
</dbReference>
<organism>
    <name type="scientific">Mycoplasmopsis pulmonis (strain UAB CTIP)</name>
    <name type="common">Mycoplasma pulmonis</name>
    <dbReference type="NCBI Taxonomy" id="272635"/>
    <lineage>
        <taxon>Bacteria</taxon>
        <taxon>Bacillati</taxon>
        <taxon>Mycoplasmatota</taxon>
        <taxon>Mycoplasmoidales</taxon>
        <taxon>Metamycoplasmataceae</taxon>
        <taxon>Mycoplasmopsis</taxon>
    </lineage>
</organism>
<proteinExistence type="inferred from homology"/>
<feature type="chain" id="PRO_0000133931" description="Enolase">
    <location>
        <begin position="1"/>
        <end position="456"/>
    </location>
</feature>
<feature type="active site" description="Proton donor" evidence="1">
    <location>
        <position position="209"/>
    </location>
</feature>
<feature type="active site" description="Proton acceptor" evidence="1">
    <location>
        <position position="364"/>
    </location>
</feature>
<feature type="binding site" evidence="1">
    <location>
        <position position="167"/>
    </location>
    <ligand>
        <name>(2R)-2-phosphoglycerate</name>
        <dbReference type="ChEBI" id="CHEBI:58289"/>
    </ligand>
</feature>
<feature type="binding site" evidence="1">
    <location>
        <position position="250"/>
    </location>
    <ligand>
        <name>Mg(2+)</name>
        <dbReference type="ChEBI" id="CHEBI:18420"/>
    </ligand>
</feature>
<feature type="binding site" evidence="1">
    <location>
        <position position="312"/>
    </location>
    <ligand>
        <name>Mg(2+)</name>
        <dbReference type="ChEBI" id="CHEBI:18420"/>
    </ligand>
</feature>
<feature type="binding site" evidence="1">
    <location>
        <position position="339"/>
    </location>
    <ligand>
        <name>Mg(2+)</name>
        <dbReference type="ChEBI" id="CHEBI:18420"/>
    </ligand>
</feature>
<feature type="binding site" evidence="1">
    <location>
        <position position="364"/>
    </location>
    <ligand>
        <name>(2R)-2-phosphoglycerate</name>
        <dbReference type="ChEBI" id="CHEBI:58289"/>
    </ligand>
</feature>
<feature type="binding site" evidence="1">
    <location>
        <position position="393"/>
    </location>
    <ligand>
        <name>(2R)-2-phosphoglycerate</name>
        <dbReference type="ChEBI" id="CHEBI:58289"/>
    </ligand>
</feature>
<feature type="binding site" evidence="1">
    <location>
        <position position="394"/>
    </location>
    <ligand>
        <name>(2R)-2-phosphoglycerate</name>
        <dbReference type="ChEBI" id="CHEBI:58289"/>
    </ligand>
</feature>
<feature type="binding site" evidence="1">
    <location>
        <position position="415"/>
    </location>
    <ligand>
        <name>(2R)-2-phosphoglycerate</name>
        <dbReference type="ChEBI" id="CHEBI:58289"/>
    </ligand>
</feature>
<accession>Q98Q50</accession>
<sequence length="456" mass="49878">MSEIVKIKALEVLDSRGNPTIQVEVHTISGAYGKALVPSGASTGSREALELRDESTKYKDNWYASKGVQKAVDNVNNKIADLLIGQNVLDQRNIDNIMIEADGTENKSKFGANAILGVSLAAAHAGANFLQIPLYRYIGGINANMLPLPMLNVINGGEHASNTIDFQEFMIMPMGAKTFKESLQMANKVFHNLAKLLKKAGHGTQVGDEGGFAPNLKNHEEVLDFLMQAIEVAGFVASTSKEKGIAIAIDAASSELYDQSTGKYTFKKLKQAIKTKQPGFENVEKTKLDFTSDELIAYYGELISKYPIISIEDGFAESDWQGFAKFTKIYGEKLQIVGDDLTVTNSKILERAIKEKSMNSILVKLNQIGSLSETLDTINMAHKAGFSAVISHRSGETEDTTIADLAVALNTGQIKTGSLSRTDRIAKYNRLLEIEDQLEEAAVFPGKKAFWNLKNR</sequence>